<name>GCS2_MICLC</name>
<comment type="function">
    <text evidence="1">ATP-dependent carboxylate-amine ligase which exhibits weak glutamate--cysteine ligase activity.</text>
</comment>
<comment type="catalytic activity">
    <reaction evidence="1">
        <text>L-cysteine + L-glutamate + ATP = gamma-L-glutamyl-L-cysteine + ADP + phosphate + H(+)</text>
        <dbReference type="Rhea" id="RHEA:13285"/>
        <dbReference type="ChEBI" id="CHEBI:15378"/>
        <dbReference type="ChEBI" id="CHEBI:29985"/>
        <dbReference type="ChEBI" id="CHEBI:30616"/>
        <dbReference type="ChEBI" id="CHEBI:35235"/>
        <dbReference type="ChEBI" id="CHEBI:43474"/>
        <dbReference type="ChEBI" id="CHEBI:58173"/>
        <dbReference type="ChEBI" id="CHEBI:456216"/>
        <dbReference type="EC" id="6.3.2.2"/>
    </reaction>
</comment>
<comment type="similarity">
    <text evidence="1">Belongs to the glutamate--cysteine ligase type 2 family. YbdK subfamily.</text>
</comment>
<evidence type="ECO:0000255" key="1">
    <source>
        <dbReference type="HAMAP-Rule" id="MF_01609"/>
    </source>
</evidence>
<proteinExistence type="inferred from homology"/>
<feature type="chain" id="PRO_1000215703" description="Putative glutamate--cysteine ligase 2">
    <location>
        <begin position="1"/>
        <end position="398"/>
    </location>
</feature>
<dbReference type="EC" id="6.3.2.2" evidence="1"/>
<dbReference type="EMBL" id="CP001628">
    <property type="protein sequence ID" value="ACS31150.1"/>
    <property type="molecule type" value="Genomic_DNA"/>
</dbReference>
<dbReference type="RefSeq" id="WP_012751033.1">
    <property type="nucleotide sequence ID" value="NC_012803.1"/>
</dbReference>
<dbReference type="SMR" id="C5CC09"/>
<dbReference type="STRING" id="465515.Mlut_16620"/>
<dbReference type="EnsemblBacteria" id="ACS31150">
    <property type="protein sequence ID" value="ACS31150"/>
    <property type="gene ID" value="Mlut_16620"/>
</dbReference>
<dbReference type="GeneID" id="93343530"/>
<dbReference type="KEGG" id="mlu:Mlut_16620"/>
<dbReference type="PATRIC" id="fig|465515.4.peg.1600"/>
<dbReference type="eggNOG" id="COG2170">
    <property type="taxonomic scope" value="Bacteria"/>
</dbReference>
<dbReference type="HOGENOM" id="CLU_044848_1_0_11"/>
<dbReference type="Proteomes" id="UP000000738">
    <property type="component" value="Chromosome"/>
</dbReference>
<dbReference type="GO" id="GO:0005524">
    <property type="term" value="F:ATP binding"/>
    <property type="evidence" value="ECO:0007669"/>
    <property type="project" value="UniProtKB-KW"/>
</dbReference>
<dbReference type="GO" id="GO:0004357">
    <property type="term" value="F:glutamate-cysteine ligase activity"/>
    <property type="evidence" value="ECO:0007669"/>
    <property type="project" value="UniProtKB-EC"/>
</dbReference>
<dbReference type="GO" id="GO:0042398">
    <property type="term" value="P:modified amino acid biosynthetic process"/>
    <property type="evidence" value="ECO:0007669"/>
    <property type="project" value="InterPro"/>
</dbReference>
<dbReference type="Gene3D" id="3.30.590.20">
    <property type="match status" value="1"/>
</dbReference>
<dbReference type="HAMAP" id="MF_01609">
    <property type="entry name" value="Glu_cys_ligase_2"/>
    <property type="match status" value="1"/>
</dbReference>
<dbReference type="InterPro" id="IPR050141">
    <property type="entry name" value="GCL_type2/YbdK_subfam"/>
</dbReference>
<dbReference type="InterPro" id="IPR006336">
    <property type="entry name" value="GCS2"/>
</dbReference>
<dbReference type="InterPro" id="IPR014746">
    <property type="entry name" value="Gln_synth/guanido_kin_cat_dom"/>
</dbReference>
<dbReference type="InterPro" id="IPR011793">
    <property type="entry name" value="YbdK"/>
</dbReference>
<dbReference type="NCBIfam" id="TIGR02050">
    <property type="entry name" value="gshA_cyan_rel"/>
    <property type="match status" value="1"/>
</dbReference>
<dbReference type="NCBIfam" id="NF010042">
    <property type="entry name" value="PRK13517.1-2"/>
    <property type="match status" value="1"/>
</dbReference>
<dbReference type="NCBIfam" id="NF010043">
    <property type="entry name" value="PRK13517.1-3"/>
    <property type="match status" value="1"/>
</dbReference>
<dbReference type="NCBIfam" id="NF010044">
    <property type="entry name" value="PRK13517.1-4"/>
    <property type="match status" value="1"/>
</dbReference>
<dbReference type="PANTHER" id="PTHR36510">
    <property type="entry name" value="GLUTAMATE--CYSTEINE LIGASE 2-RELATED"/>
    <property type="match status" value="1"/>
</dbReference>
<dbReference type="PANTHER" id="PTHR36510:SF1">
    <property type="entry name" value="GLUTAMATE--CYSTEINE LIGASE 2-RELATED"/>
    <property type="match status" value="1"/>
</dbReference>
<dbReference type="Pfam" id="PF04107">
    <property type="entry name" value="GCS2"/>
    <property type="match status" value="1"/>
</dbReference>
<dbReference type="SUPFAM" id="SSF55931">
    <property type="entry name" value="Glutamine synthetase/guanido kinase"/>
    <property type="match status" value="1"/>
</dbReference>
<gene>
    <name type="ordered locus">Mlut_16620</name>
</gene>
<keyword id="KW-0067">ATP-binding</keyword>
<keyword id="KW-0436">Ligase</keyword>
<keyword id="KW-0547">Nucleotide-binding</keyword>
<keyword id="KW-1185">Reference proteome</keyword>
<protein>
    <recommendedName>
        <fullName evidence="1">Putative glutamate--cysteine ligase 2</fullName>
        <ecNumber evidence="1">6.3.2.2</ecNumber>
    </recommendedName>
    <alternativeName>
        <fullName evidence="1">Gamma-glutamylcysteine synthetase 2</fullName>
        <shortName evidence="1">GCS 2</shortName>
        <shortName evidence="1">Gamma-GCS 2</shortName>
    </alternativeName>
</protein>
<sequence>MTLPFADSAQSTLGIEWELALVDAVSGELRSEAPDLLRALHVAEGLADDDVNPHMTSELLQNTVELVTGVHERVDAATADLGRIAARVADAAAARGISLFCQGTHPFADAIAQPSTPSERYDRMLDLTQYWGRQLLIFGVHVHVGLDDVSKAMPVVNGLVNRVPHLLALSASSPFWAGTDTGYQSQRTLLFQQLPTAGLPFQFQEWEDFERCVAQMEQVGMIADVTECRWDVRAVPRLGTVEMRACDGLATLEEIAAVTAYTQCLVDDLSASLERGETVEVLPPWHAQENKWRAARYGMDATVIVDARGTQVPLAEHLPAEIERLTPVAERLGCEAELAGVQAMIDDGGAARQRRVEAQALAGPPAEGEDADDAVAPLRAVVLDAAARTRASLDGRTG</sequence>
<accession>C5CC09</accession>
<reference key="1">
    <citation type="journal article" date="2010" name="J. Bacteriol.">
        <title>Genome sequence of the Fleming strain of Micrococcus luteus, a simple free-living actinobacterium.</title>
        <authorList>
            <person name="Young M."/>
            <person name="Artsatbanov V."/>
            <person name="Beller H.R."/>
            <person name="Chandra G."/>
            <person name="Chater K.F."/>
            <person name="Dover L.G."/>
            <person name="Goh E.B."/>
            <person name="Kahan T."/>
            <person name="Kaprelyants A.S."/>
            <person name="Kyrpides N."/>
            <person name="Lapidus A."/>
            <person name="Lowry S.R."/>
            <person name="Lykidis A."/>
            <person name="Mahillon J."/>
            <person name="Markowitz V."/>
            <person name="Mavromatis K."/>
            <person name="Mukamolova G.V."/>
            <person name="Oren A."/>
            <person name="Rokem J.S."/>
            <person name="Smith M.C."/>
            <person name="Young D.I."/>
            <person name="Greenblatt C.L."/>
        </authorList>
    </citation>
    <scope>NUCLEOTIDE SEQUENCE [LARGE SCALE GENOMIC DNA]</scope>
    <source>
        <strain>ATCC 4698 / DSM 20030 / JCM 1464 / CCM 169 / CCUG 5858 / IAM 1056 / NBRC 3333 / NCIMB 9278 / NCTC 2665 / VKM Ac-2230</strain>
    </source>
</reference>
<organism>
    <name type="scientific">Micrococcus luteus (strain ATCC 4698 / DSM 20030 / JCM 1464 / CCM 169 / CCUG 5858 / IAM 1056 / NBRC 3333 / NCIMB 9278 / NCTC 2665 / VKM Ac-2230)</name>
    <name type="common">Micrococcus lysodeikticus</name>
    <dbReference type="NCBI Taxonomy" id="465515"/>
    <lineage>
        <taxon>Bacteria</taxon>
        <taxon>Bacillati</taxon>
        <taxon>Actinomycetota</taxon>
        <taxon>Actinomycetes</taxon>
        <taxon>Micrococcales</taxon>
        <taxon>Micrococcaceae</taxon>
        <taxon>Micrococcus</taxon>
    </lineage>
</organism>